<gene>
    <name evidence="1" type="primary">orn</name>
    <name type="ordered locus">PFL_0558</name>
</gene>
<keyword id="KW-0963">Cytoplasm</keyword>
<keyword id="KW-0269">Exonuclease</keyword>
<keyword id="KW-0378">Hydrolase</keyword>
<keyword id="KW-0540">Nuclease</keyword>
<reference key="1">
    <citation type="journal article" date="2005" name="Nat. Biotechnol.">
        <title>Complete genome sequence of the plant commensal Pseudomonas fluorescens Pf-5.</title>
        <authorList>
            <person name="Paulsen I.T."/>
            <person name="Press C.M."/>
            <person name="Ravel J."/>
            <person name="Kobayashi D.Y."/>
            <person name="Myers G.S.A."/>
            <person name="Mavrodi D.V."/>
            <person name="DeBoy R.T."/>
            <person name="Seshadri R."/>
            <person name="Ren Q."/>
            <person name="Madupu R."/>
            <person name="Dodson R.J."/>
            <person name="Durkin A.S."/>
            <person name="Brinkac L.M."/>
            <person name="Daugherty S.C."/>
            <person name="Sullivan S.A."/>
            <person name="Rosovitz M.J."/>
            <person name="Gwinn M.L."/>
            <person name="Zhou L."/>
            <person name="Schneider D.J."/>
            <person name="Cartinhour S.W."/>
            <person name="Nelson W.C."/>
            <person name="Weidman J."/>
            <person name="Watkins K."/>
            <person name="Tran K."/>
            <person name="Khouri H."/>
            <person name="Pierson E.A."/>
            <person name="Pierson L.S. III"/>
            <person name="Thomashow L.S."/>
            <person name="Loper J.E."/>
        </authorList>
    </citation>
    <scope>NUCLEOTIDE SEQUENCE [LARGE SCALE GENOMIC DNA]</scope>
    <source>
        <strain>ATCC BAA-477 / NRRL B-23932 / Pf-5</strain>
    </source>
</reference>
<feature type="chain" id="PRO_0000111062" description="Oligoribonuclease">
    <location>
        <begin position="1"/>
        <end position="180"/>
    </location>
</feature>
<feature type="domain" description="Exonuclease" evidence="1">
    <location>
        <begin position="7"/>
        <end position="170"/>
    </location>
</feature>
<feature type="active site" evidence="1">
    <location>
        <position position="128"/>
    </location>
</feature>
<protein>
    <recommendedName>
        <fullName evidence="1">Oligoribonuclease</fullName>
        <ecNumber evidence="1">3.1.15.-</ecNumber>
    </recommendedName>
</protein>
<proteinExistence type="inferred from homology"/>
<comment type="function">
    <text evidence="1">3'-to-5' exoribonuclease specific for small oligoribonucleotides.</text>
</comment>
<comment type="subcellular location">
    <subcellularLocation>
        <location evidence="1">Cytoplasm</location>
    </subcellularLocation>
</comment>
<comment type="similarity">
    <text evidence="1">Belongs to the oligoribonuclease family.</text>
</comment>
<evidence type="ECO:0000255" key="1">
    <source>
        <dbReference type="HAMAP-Rule" id="MF_00045"/>
    </source>
</evidence>
<sequence length="180" mass="20626">MQNPQNLIWIDLEMTGLNPDTDVIIEMATIVTDSNLNTLAEGPVIAIHQSDEILAGMDEWNTRQHGGSGLTQRVRESRISMAEAEAQTIAFLEQWVPKGKSPICGNSICQDRRFLYRHMKALESYFHYRNLDVSTLKELAARWAPDVRDSFKKGSTHLALDDIRESIAELQHYRKHFIKF</sequence>
<organism>
    <name type="scientific">Pseudomonas fluorescens (strain ATCC BAA-477 / NRRL B-23932 / Pf-5)</name>
    <dbReference type="NCBI Taxonomy" id="220664"/>
    <lineage>
        <taxon>Bacteria</taxon>
        <taxon>Pseudomonadati</taxon>
        <taxon>Pseudomonadota</taxon>
        <taxon>Gammaproteobacteria</taxon>
        <taxon>Pseudomonadales</taxon>
        <taxon>Pseudomonadaceae</taxon>
        <taxon>Pseudomonas</taxon>
    </lineage>
</organism>
<accession>Q4KJ81</accession>
<dbReference type="EC" id="3.1.15.-" evidence="1"/>
<dbReference type="EMBL" id="CP000076">
    <property type="protein sequence ID" value="AAY95967.1"/>
    <property type="molecule type" value="Genomic_DNA"/>
</dbReference>
<dbReference type="RefSeq" id="WP_011058931.1">
    <property type="nucleotide sequence ID" value="NC_004129.6"/>
</dbReference>
<dbReference type="SMR" id="Q4KJ81"/>
<dbReference type="STRING" id="220664.PFL_0558"/>
<dbReference type="GeneID" id="57473548"/>
<dbReference type="KEGG" id="pfl:PFL_0558"/>
<dbReference type="eggNOG" id="COG1949">
    <property type="taxonomic scope" value="Bacteria"/>
</dbReference>
<dbReference type="HOGENOM" id="CLU_064761_2_0_6"/>
<dbReference type="Proteomes" id="UP000008540">
    <property type="component" value="Chromosome"/>
</dbReference>
<dbReference type="GO" id="GO:0005737">
    <property type="term" value="C:cytoplasm"/>
    <property type="evidence" value="ECO:0007669"/>
    <property type="project" value="UniProtKB-SubCell"/>
</dbReference>
<dbReference type="GO" id="GO:0000175">
    <property type="term" value="F:3'-5'-RNA exonuclease activity"/>
    <property type="evidence" value="ECO:0007669"/>
    <property type="project" value="InterPro"/>
</dbReference>
<dbReference type="GO" id="GO:0003676">
    <property type="term" value="F:nucleic acid binding"/>
    <property type="evidence" value="ECO:0007669"/>
    <property type="project" value="InterPro"/>
</dbReference>
<dbReference type="GO" id="GO:0006259">
    <property type="term" value="P:DNA metabolic process"/>
    <property type="evidence" value="ECO:0007669"/>
    <property type="project" value="UniProtKB-ARBA"/>
</dbReference>
<dbReference type="CDD" id="cd06135">
    <property type="entry name" value="Orn"/>
    <property type="match status" value="1"/>
</dbReference>
<dbReference type="FunFam" id="3.30.420.10:FF:000003">
    <property type="entry name" value="Oligoribonuclease"/>
    <property type="match status" value="1"/>
</dbReference>
<dbReference type="Gene3D" id="3.30.420.10">
    <property type="entry name" value="Ribonuclease H-like superfamily/Ribonuclease H"/>
    <property type="match status" value="1"/>
</dbReference>
<dbReference type="HAMAP" id="MF_00045">
    <property type="entry name" value="Oligoribonuclease"/>
    <property type="match status" value="1"/>
</dbReference>
<dbReference type="InterPro" id="IPR013520">
    <property type="entry name" value="Exonuclease_RNaseT/DNA_pol3"/>
</dbReference>
<dbReference type="InterPro" id="IPR022894">
    <property type="entry name" value="Oligoribonuclease"/>
</dbReference>
<dbReference type="InterPro" id="IPR012337">
    <property type="entry name" value="RNaseH-like_sf"/>
</dbReference>
<dbReference type="InterPro" id="IPR036397">
    <property type="entry name" value="RNaseH_sf"/>
</dbReference>
<dbReference type="NCBIfam" id="NF003765">
    <property type="entry name" value="PRK05359.1"/>
    <property type="match status" value="1"/>
</dbReference>
<dbReference type="PANTHER" id="PTHR11046">
    <property type="entry name" value="OLIGORIBONUCLEASE, MITOCHONDRIAL"/>
    <property type="match status" value="1"/>
</dbReference>
<dbReference type="PANTHER" id="PTHR11046:SF0">
    <property type="entry name" value="OLIGORIBONUCLEASE, MITOCHONDRIAL"/>
    <property type="match status" value="1"/>
</dbReference>
<dbReference type="Pfam" id="PF00929">
    <property type="entry name" value="RNase_T"/>
    <property type="match status" value="1"/>
</dbReference>
<dbReference type="SMART" id="SM00479">
    <property type="entry name" value="EXOIII"/>
    <property type="match status" value="1"/>
</dbReference>
<dbReference type="SUPFAM" id="SSF53098">
    <property type="entry name" value="Ribonuclease H-like"/>
    <property type="match status" value="1"/>
</dbReference>
<name>ORN_PSEF5</name>